<evidence type="ECO:0000255" key="1">
    <source>
        <dbReference type="HAMAP-Rule" id="MF_00016"/>
    </source>
</evidence>
<reference key="1">
    <citation type="journal article" date="2008" name="Environ. Microbiol.">
        <title>The complete genome sequence of Moorella thermoacetica (f. Clostridium thermoaceticum).</title>
        <authorList>
            <person name="Pierce E."/>
            <person name="Xie G."/>
            <person name="Barabote R.D."/>
            <person name="Saunders E."/>
            <person name="Han C.S."/>
            <person name="Detter J.C."/>
            <person name="Richardson P."/>
            <person name="Brettin T.S."/>
            <person name="Das A."/>
            <person name="Ljungdahl L.G."/>
            <person name="Ragsdale S.W."/>
        </authorList>
    </citation>
    <scope>NUCLEOTIDE SEQUENCE [LARGE SCALE GENOMIC DNA]</scope>
    <source>
        <strain>ATCC 39073 / JCM 9320</strain>
    </source>
</reference>
<comment type="function">
    <text evidence="1">The RuvA-RuvB-RuvC complex processes Holliday junction (HJ) DNA during genetic recombination and DNA repair, while the RuvA-RuvB complex plays an important role in the rescue of blocked DNA replication forks via replication fork reversal (RFR). RuvA specifically binds to HJ cruciform DNA, conferring on it an open structure. The RuvB hexamer acts as an ATP-dependent pump, pulling dsDNA into and through the RuvAB complex. RuvB forms 2 homohexamers on either side of HJ DNA bound by 1 or 2 RuvA tetramers; 4 subunits per hexamer contact DNA at a time. Coordinated motions by a converter formed by DNA-disengaged RuvB subunits stimulates ATP hydrolysis and nucleotide exchange. Immobilization of the converter enables RuvB to convert the ATP-contained energy into a lever motion, pulling 2 nucleotides of DNA out of the RuvA tetramer per ATP hydrolyzed, thus driving DNA branch migration. The RuvB motors rotate together with the DNA substrate, which together with the progressing nucleotide cycle form the mechanistic basis for DNA recombination by continuous HJ branch migration. Branch migration allows RuvC to scan DNA until it finds its consensus sequence, where it cleaves and resolves cruciform DNA.</text>
</comment>
<comment type="catalytic activity">
    <reaction evidence="1">
        <text>ATP + H2O = ADP + phosphate + H(+)</text>
        <dbReference type="Rhea" id="RHEA:13065"/>
        <dbReference type="ChEBI" id="CHEBI:15377"/>
        <dbReference type="ChEBI" id="CHEBI:15378"/>
        <dbReference type="ChEBI" id="CHEBI:30616"/>
        <dbReference type="ChEBI" id="CHEBI:43474"/>
        <dbReference type="ChEBI" id="CHEBI:456216"/>
    </reaction>
</comment>
<comment type="subunit">
    <text evidence="1">Homohexamer. Forms an RuvA(8)-RuvB(12)-Holliday junction (HJ) complex. HJ DNA is sandwiched between 2 RuvA tetramers; dsDNA enters through RuvA and exits via RuvB. An RuvB hexamer assembles on each DNA strand where it exits the tetramer. Each RuvB hexamer is contacted by two RuvA subunits (via domain III) on 2 adjacent RuvB subunits; this complex drives branch migration. In the full resolvosome a probable DNA-RuvA(4)-RuvB(12)-RuvC(2) complex forms which resolves the HJ.</text>
</comment>
<comment type="subcellular location">
    <subcellularLocation>
        <location evidence="1">Cytoplasm</location>
    </subcellularLocation>
</comment>
<comment type="domain">
    <text evidence="1">Has 3 domains, the large (RuvB-L) and small ATPase (RuvB-S) domains and the C-terminal head (RuvB-H) domain. The head domain binds DNA, while the ATPase domains jointly bind ATP, ADP or are empty depending on the state of the subunit in the translocation cycle. During a single DNA translocation step the structure of each domain remains the same, but their relative positions change.</text>
</comment>
<comment type="similarity">
    <text evidence="1">Belongs to the RuvB family.</text>
</comment>
<feature type="chain" id="PRO_0000235378" description="Holliday junction branch migration complex subunit RuvB">
    <location>
        <begin position="1"/>
        <end position="336"/>
    </location>
</feature>
<feature type="region of interest" description="Large ATPase domain (RuvB-L)" evidence="1">
    <location>
        <begin position="1"/>
        <end position="183"/>
    </location>
</feature>
<feature type="region of interest" description="Small ATPAse domain (RuvB-S)" evidence="1">
    <location>
        <begin position="184"/>
        <end position="254"/>
    </location>
</feature>
<feature type="region of interest" description="Head domain (RuvB-H)" evidence="1">
    <location>
        <begin position="257"/>
        <end position="336"/>
    </location>
</feature>
<feature type="binding site" evidence="1">
    <location>
        <position position="22"/>
    </location>
    <ligand>
        <name>ATP</name>
        <dbReference type="ChEBI" id="CHEBI:30616"/>
    </ligand>
</feature>
<feature type="binding site" evidence="1">
    <location>
        <position position="23"/>
    </location>
    <ligand>
        <name>ATP</name>
        <dbReference type="ChEBI" id="CHEBI:30616"/>
    </ligand>
</feature>
<feature type="binding site" evidence="1">
    <location>
        <position position="64"/>
    </location>
    <ligand>
        <name>ATP</name>
        <dbReference type="ChEBI" id="CHEBI:30616"/>
    </ligand>
</feature>
<feature type="binding site" evidence="1">
    <location>
        <position position="67"/>
    </location>
    <ligand>
        <name>ATP</name>
        <dbReference type="ChEBI" id="CHEBI:30616"/>
    </ligand>
</feature>
<feature type="binding site" evidence="1">
    <location>
        <position position="68"/>
    </location>
    <ligand>
        <name>ATP</name>
        <dbReference type="ChEBI" id="CHEBI:30616"/>
    </ligand>
</feature>
<feature type="binding site" evidence="1">
    <location>
        <position position="68"/>
    </location>
    <ligand>
        <name>Mg(2+)</name>
        <dbReference type="ChEBI" id="CHEBI:18420"/>
    </ligand>
</feature>
<feature type="binding site" evidence="1">
    <location>
        <position position="69"/>
    </location>
    <ligand>
        <name>ATP</name>
        <dbReference type="ChEBI" id="CHEBI:30616"/>
    </ligand>
</feature>
<feature type="binding site" evidence="1">
    <location>
        <begin position="130"/>
        <end position="132"/>
    </location>
    <ligand>
        <name>ATP</name>
        <dbReference type="ChEBI" id="CHEBI:30616"/>
    </ligand>
</feature>
<feature type="binding site" evidence="1">
    <location>
        <position position="173"/>
    </location>
    <ligand>
        <name>ATP</name>
        <dbReference type="ChEBI" id="CHEBI:30616"/>
    </ligand>
</feature>
<feature type="binding site" evidence="1">
    <location>
        <position position="183"/>
    </location>
    <ligand>
        <name>ATP</name>
        <dbReference type="ChEBI" id="CHEBI:30616"/>
    </ligand>
</feature>
<feature type="binding site" evidence="1">
    <location>
        <position position="220"/>
    </location>
    <ligand>
        <name>ATP</name>
        <dbReference type="ChEBI" id="CHEBI:30616"/>
    </ligand>
</feature>
<feature type="binding site" evidence="1">
    <location>
        <position position="312"/>
    </location>
    <ligand>
        <name>DNA</name>
        <dbReference type="ChEBI" id="CHEBI:16991"/>
    </ligand>
</feature>
<feature type="binding site" evidence="1">
    <location>
        <position position="317"/>
    </location>
    <ligand>
        <name>DNA</name>
        <dbReference type="ChEBI" id="CHEBI:16991"/>
    </ligand>
</feature>
<accession>Q2RHT7</accession>
<protein>
    <recommendedName>
        <fullName evidence="1">Holliday junction branch migration complex subunit RuvB</fullName>
        <ecNumber evidence="1">3.6.4.-</ecNumber>
    </recommendedName>
</protein>
<dbReference type="EC" id="3.6.4.-" evidence="1"/>
<dbReference type="EMBL" id="CP000232">
    <property type="protein sequence ID" value="ABC20002.1"/>
    <property type="molecule type" value="Genomic_DNA"/>
</dbReference>
<dbReference type="RefSeq" id="YP_430545.1">
    <property type="nucleotide sequence ID" value="NC_007644.1"/>
</dbReference>
<dbReference type="SMR" id="Q2RHT7"/>
<dbReference type="STRING" id="264732.Moth_1700"/>
<dbReference type="EnsemblBacteria" id="ABC20002">
    <property type="protein sequence ID" value="ABC20002"/>
    <property type="gene ID" value="Moth_1700"/>
</dbReference>
<dbReference type="KEGG" id="mta:Moth_1700"/>
<dbReference type="PATRIC" id="fig|264732.11.peg.1841"/>
<dbReference type="eggNOG" id="COG2255">
    <property type="taxonomic scope" value="Bacteria"/>
</dbReference>
<dbReference type="HOGENOM" id="CLU_055599_1_0_9"/>
<dbReference type="OrthoDB" id="9804478at2"/>
<dbReference type="GO" id="GO:0005737">
    <property type="term" value="C:cytoplasm"/>
    <property type="evidence" value="ECO:0007669"/>
    <property type="project" value="UniProtKB-SubCell"/>
</dbReference>
<dbReference type="GO" id="GO:0048476">
    <property type="term" value="C:Holliday junction resolvase complex"/>
    <property type="evidence" value="ECO:0007669"/>
    <property type="project" value="UniProtKB-UniRule"/>
</dbReference>
<dbReference type="GO" id="GO:0005524">
    <property type="term" value="F:ATP binding"/>
    <property type="evidence" value="ECO:0007669"/>
    <property type="project" value="UniProtKB-UniRule"/>
</dbReference>
<dbReference type="GO" id="GO:0016887">
    <property type="term" value="F:ATP hydrolysis activity"/>
    <property type="evidence" value="ECO:0007669"/>
    <property type="project" value="InterPro"/>
</dbReference>
<dbReference type="GO" id="GO:0000400">
    <property type="term" value="F:four-way junction DNA binding"/>
    <property type="evidence" value="ECO:0007669"/>
    <property type="project" value="UniProtKB-UniRule"/>
</dbReference>
<dbReference type="GO" id="GO:0009378">
    <property type="term" value="F:four-way junction helicase activity"/>
    <property type="evidence" value="ECO:0007669"/>
    <property type="project" value="InterPro"/>
</dbReference>
<dbReference type="GO" id="GO:0006310">
    <property type="term" value="P:DNA recombination"/>
    <property type="evidence" value="ECO:0007669"/>
    <property type="project" value="UniProtKB-UniRule"/>
</dbReference>
<dbReference type="GO" id="GO:0006281">
    <property type="term" value="P:DNA repair"/>
    <property type="evidence" value="ECO:0007669"/>
    <property type="project" value="UniProtKB-UniRule"/>
</dbReference>
<dbReference type="CDD" id="cd00009">
    <property type="entry name" value="AAA"/>
    <property type="match status" value="1"/>
</dbReference>
<dbReference type="FunFam" id="3.40.50.300:FF:000073">
    <property type="entry name" value="Holliday junction ATP-dependent DNA helicase RuvB"/>
    <property type="match status" value="1"/>
</dbReference>
<dbReference type="Gene3D" id="1.10.8.60">
    <property type="match status" value="1"/>
</dbReference>
<dbReference type="Gene3D" id="3.40.50.300">
    <property type="entry name" value="P-loop containing nucleotide triphosphate hydrolases"/>
    <property type="match status" value="1"/>
</dbReference>
<dbReference type="Gene3D" id="1.10.10.10">
    <property type="entry name" value="Winged helix-like DNA-binding domain superfamily/Winged helix DNA-binding domain"/>
    <property type="match status" value="1"/>
</dbReference>
<dbReference type="HAMAP" id="MF_00016">
    <property type="entry name" value="DNA_HJ_migration_RuvB"/>
    <property type="match status" value="1"/>
</dbReference>
<dbReference type="InterPro" id="IPR003593">
    <property type="entry name" value="AAA+_ATPase"/>
</dbReference>
<dbReference type="InterPro" id="IPR041445">
    <property type="entry name" value="AAA_lid_4"/>
</dbReference>
<dbReference type="InterPro" id="IPR004605">
    <property type="entry name" value="DNA_helicase_Holl-junc_RuvB"/>
</dbReference>
<dbReference type="InterPro" id="IPR027417">
    <property type="entry name" value="P-loop_NTPase"/>
</dbReference>
<dbReference type="InterPro" id="IPR008824">
    <property type="entry name" value="RuvB-like_N"/>
</dbReference>
<dbReference type="InterPro" id="IPR008823">
    <property type="entry name" value="RuvB_C"/>
</dbReference>
<dbReference type="InterPro" id="IPR036388">
    <property type="entry name" value="WH-like_DNA-bd_sf"/>
</dbReference>
<dbReference type="InterPro" id="IPR036390">
    <property type="entry name" value="WH_DNA-bd_sf"/>
</dbReference>
<dbReference type="NCBIfam" id="NF000868">
    <property type="entry name" value="PRK00080.1"/>
    <property type="match status" value="1"/>
</dbReference>
<dbReference type="NCBIfam" id="TIGR00635">
    <property type="entry name" value="ruvB"/>
    <property type="match status" value="1"/>
</dbReference>
<dbReference type="PANTHER" id="PTHR42848">
    <property type="match status" value="1"/>
</dbReference>
<dbReference type="PANTHER" id="PTHR42848:SF1">
    <property type="entry name" value="HOLLIDAY JUNCTION BRANCH MIGRATION COMPLEX SUBUNIT RUVB"/>
    <property type="match status" value="1"/>
</dbReference>
<dbReference type="Pfam" id="PF17864">
    <property type="entry name" value="AAA_lid_4"/>
    <property type="match status" value="1"/>
</dbReference>
<dbReference type="Pfam" id="PF05491">
    <property type="entry name" value="RuvB_C"/>
    <property type="match status" value="1"/>
</dbReference>
<dbReference type="Pfam" id="PF05496">
    <property type="entry name" value="RuvB_N"/>
    <property type="match status" value="1"/>
</dbReference>
<dbReference type="SMART" id="SM00382">
    <property type="entry name" value="AAA"/>
    <property type="match status" value="1"/>
</dbReference>
<dbReference type="SUPFAM" id="SSF52540">
    <property type="entry name" value="P-loop containing nucleoside triphosphate hydrolases"/>
    <property type="match status" value="1"/>
</dbReference>
<dbReference type="SUPFAM" id="SSF46785">
    <property type="entry name" value="Winged helix' DNA-binding domain"/>
    <property type="match status" value="1"/>
</dbReference>
<organism>
    <name type="scientific">Moorella thermoacetica (strain ATCC 39073 / JCM 9320)</name>
    <dbReference type="NCBI Taxonomy" id="264732"/>
    <lineage>
        <taxon>Bacteria</taxon>
        <taxon>Bacillati</taxon>
        <taxon>Bacillota</taxon>
        <taxon>Clostridia</taxon>
        <taxon>Moorellales</taxon>
        <taxon>Moorellaceae</taxon>
        <taxon>Moorella</taxon>
    </lineage>
</organism>
<keyword id="KW-0067">ATP-binding</keyword>
<keyword id="KW-0963">Cytoplasm</keyword>
<keyword id="KW-0227">DNA damage</keyword>
<keyword id="KW-0233">DNA recombination</keyword>
<keyword id="KW-0234">DNA repair</keyword>
<keyword id="KW-0238">DNA-binding</keyword>
<keyword id="KW-0378">Hydrolase</keyword>
<keyword id="KW-0547">Nucleotide-binding</keyword>
<gene>
    <name evidence="1" type="primary">ruvB</name>
    <name type="ordered locus">Moth_1700</name>
</gene>
<sequence>MATERLVAGNLHNEDQELELSLRPRCLAEYIGQEHVKETLGIFIQAARERGEALDHVLLYGPPGLGKTTLAGIIANELGVQLRVTSGPALERAGDLAAILTNLQPRDVLFIDEIHRLPRQVEEILYPAMEDFVLDIILGKGPGARSIRLDLPPFTLVGATTRAGLLSSPLRDRFGINSRLEFYQVAELEEIIRRAATILQVAIEPEGAREIARRARGTPRVANRLLKRVRDYAEIRAGGVITREVAREALELLQVDAAGLDSSDRRLLLTLIRKFNGGPVGLETLAAAISEEPDTIEDVYEPFLLQMGYLQRTPRGRVATPGAYAHLGIKPEDRLF</sequence>
<name>RUVB_MOOTA</name>
<proteinExistence type="inferred from homology"/>